<protein>
    <recommendedName>
        <fullName evidence="1">N-(5'-phosphoribosyl)anthranilate isomerase</fullName>
        <shortName evidence="1">PRAI</shortName>
        <ecNumber evidence="1">5.3.1.24</ecNumber>
    </recommendedName>
</protein>
<proteinExistence type="inferred from homology"/>
<gene>
    <name evidence="1" type="primary">trpF</name>
    <name type="ordered locus">Psyr_1663</name>
</gene>
<accession>Q4ZVW1</accession>
<keyword id="KW-0028">Amino-acid biosynthesis</keyword>
<keyword id="KW-0057">Aromatic amino acid biosynthesis</keyword>
<keyword id="KW-0413">Isomerase</keyword>
<keyword id="KW-0822">Tryptophan biosynthesis</keyword>
<name>TRPF_PSEU2</name>
<comment type="catalytic activity">
    <reaction evidence="1">
        <text>N-(5-phospho-beta-D-ribosyl)anthranilate = 1-(2-carboxyphenylamino)-1-deoxy-D-ribulose 5-phosphate</text>
        <dbReference type="Rhea" id="RHEA:21540"/>
        <dbReference type="ChEBI" id="CHEBI:18277"/>
        <dbReference type="ChEBI" id="CHEBI:58613"/>
        <dbReference type="EC" id="5.3.1.24"/>
    </reaction>
</comment>
<comment type="pathway">
    <text evidence="1">Amino-acid biosynthesis; L-tryptophan biosynthesis; L-tryptophan from chorismate: step 3/5.</text>
</comment>
<comment type="similarity">
    <text evidence="1">Belongs to the TrpF family.</text>
</comment>
<organism>
    <name type="scientific">Pseudomonas syringae pv. syringae (strain B728a)</name>
    <dbReference type="NCBI Taxonomy" id="205918"/>
    <lineage>
        <taxon>Bacteria</taxon>
        <taxon>Pseudomonadati</taxon>
        <taxon>Pseudomonadota</taxon>
        <taxon>Gammaproteobacteria</taxon>
        <taxon>Pseudomonadales</taxon>
        <taxon>Pseudomonadaceae</taxon>
        <taxon>Pseudomonas</taxon>
        <taxon>Pseudomonas syringae</taxon>
    </lineage>
</organism>
<feature type="chain" id="PRO_1000018626" description="N-(5'-phosphoribosyl)anthranilate isomerase">
    <location>
        <begin position="1"/>
        <end position="206"/>
    </location>
</feature>
<reference key="1">
    <citation type="journal article" date="2005" name="Proc. Natl. Acad. Sci. U.S.A.">
        <title>Comparison of the complete genome sequences of Pseudomonas syringae pv. syringae B728a and pv. tomato DC3000.</title>
        <authorList>
            <person name="Feil H."/>
            <person name="Feil W.S."/>
            <person name="Chain P."/>
            <person name="Larimer F."/>
            <person name="Dibartolo G."/>
            <person name="Copeland A."/>
            <person name="Lykidis A."/>
            <person name="Trong S."/>
            <person name="Nolan M."/>
            <person name="Goltsman E."/>
            <person name="Thiel J."/>
            <person name="Malfatti S."/>
            <person name="Loper J.E."/>
            <person name="Lapidus A."/>
            <person name="Detter J.C."/>
            <person name="Land M."/>
            <person name="Richardson P.M."/>
            <person name="Kyrpides N.C."/>
            <person name="Ivanova N."/>
            <person name="Lindow S.E."/>
        </authorList>
    </citation>
    <scope>NUCLEOTIDE SEQUENCE [LARGE SCALE GENOMIC DNA]</scope>
    <source>
        <strain>B728a</strain>
    </source>
</reference>
<evidence type="ECO:0000255" key="1">
    <source>
        <dbReference type="HAMAP-Rule" id="MF_00135"/>
    </source>
</evidence>
<dbReference type="EC" id="5.3.1.24" evidence="1"/>
<dbReference type="EMBL" id="CP000075">
    <property type="protein sequence ID" value="AAY36711.1"/>
    <property type="molecule type" value="Genomic_DNA"/>
</dbReference>
<dbReference type="RefSeq" id="WP_004408280.1">
    <property type="nucleotide sequence ID" value="NC_007005.1"/>
</dbReference>
<dbReference type="RefSeq" id="YP_234749.1">
    <property type="nucleotide sequence ID" value="NC_007005.1"/>
</dbReference>
<dbReference type="SMR" id="Q4ZVW1"/>
<dbReference type="STRING" id="205918.Psyr_1663"/>
<dbReference type="KEGG" id="psb:Psyr_1663"/>
<dbReference type="PATRIC" id="fig|205918.7.peg.1700"/>
<dbReference type="eggNOG" id="COG0135">
    <property type="taxonomic scope" value="Bacteria"/>
</dbReference>
<dbReference type="HOGENOM" id="CLU_076364_2_0_6"/>
<dbReference type="OrthoDB" id="9796196at2"/>
<dbReference type="UniPathway" id="UPA00035">
    <property type="reaction ID" value="UER00042"/>
</dbReference>
<dbReference type="Proteomes" id="UP000000426">
    <property type="component" value="Chromosome"/>
</dbReference>
<dbReference type="GO" id="GO:0004640">
    <property type="term" value="F:phosphoribosylanthranilate isomerase activity"/>
    <property type="evidence" value="ECO:0007669"/>
    <property type="project" value="UniProtKB-UniRule"/>
</dbReference>
<dbReference type="GO" id="GO:0000162">
    <property type="term" value="P:L-tryptophan biosynthetic process"/>
    <property type="evidence" value="ECO:0007669"/>
    <property type="project" value="UniProtKB-UniRule"/>
</dbReference>
<dbReference type="CDD" id="cd00405">
    <property type="entry name" value="PRAI"/>
    <property type="match status" value="1"/>
</dbReference>
<dbReference type="FunFam" id="3.20.20.70:FF:000075">
    <property type="entry name" value="Tryptophan biosynthesis protein TRP1"/>
    <property type="match status" value="1"/>
</dbReference>
<dbReference type="Gene3D" id="3.20.20.70">
    <property type="entry name" value="Aldolase class I"/>
    <property type="match status" value="1"/>
</dbReference>
<dbReference type="HAMAP" id="MF_00135">
    <property type="entry name" value="PRAI"/>
    <property type="match status" value="1"/>
</dbReference>
<dbReference type="InterPro" id="IPR013785">
    <property type="entry name" value="Aldolase_TIM"/>
</dbReference>
<dbReference type="InterPro" id="IPR001240">
    <property type="entry name" value="PRAI_dom"/>
</dbReference>
<dbReference type="InterPro" id="IPR011060">
    <property type="entry name" value="RibuloseP-bd_barrel"/>
</dbReference>
<dbReference type="InterPro" id="IPR044643">
    <property type="entry name" value="TrpF_fam"/>
</dbReference>
<dbReference type="NCBIfam" id="NF002298">
    <property type="entry name" value="PRK01222.1-4"/>
    <property type="match status" value="1"/>
</dbReference>
<dbReference type="NCBIfam" id="NF002299">
    <property type="entry name" value="PRK01222.1-6"/>
    <property type="match status" value="1"/>
</dbReference>
<dbReference type="PANTHER" id="PTHR42894">
    <property type="entry name" value="N-(5'-PHOSPHORIBOSYL)ANTHRANILATE ISOMERASE"/>
    <property type="match status" value="1"/>
</dbReference>
<dbReference type="PANTHER" id="PTHR42894:SF1">
    <property type="entry name" value="N-(5'-PHOSPHORIBOSYL)ANTHRANILATE ISOMERASE"/>
    <property type="match status" value="1"/>
</dbReference>
<dbReference type="Pfam" id="PF00697">
    <property type="entry name" value="PRAI"/>
    <property type="match status" value="1"/>
</dbReference>
<dbReference type="SUPFAM" id="SSF51366">
    <property type="entry name" value="Ribulose-phoshate binding barrel"/>
    <property type="match status" value="1"/>
</dbReference>
<sequence>MSAVRSKICGITRIEDALAAAEAGADAIGLVFYPKSPRAVTVLQARAIIAALPPFITTVGLFVNASRCELNETLDAVALDMLQFHGDETPEECDGYHRPYVKALRVKAGDDIAGVCRTYRNARGVLLDTYVEGVPGGTGETFDWALIPDDLDKPVILAGGLTSANVAQAIAQVRPYAVDVSGGVEKSKGIKDREKILAFMSAVHGT</sequence>